<dbReference type="EC" id="1.3.1.9" evidence="1"/>
<dbReference type="EMBL" id="CR378671">
    <property type="protein sequence ID" value="CAG20807.1"/>
    <property type="status" value="ALT_INIT"/>
    <property type="molecule type" value="Genomic_DNA"/>
</dbReference>
<dbReference type="RefSeq" id="WP_011219091.1">
    <property type="nucleotide sequence ID" value="NC_006370.1"/>
</dbReference>
<dbReference type="SMR" id="Q6LPG9"/>
<dbReference type="STRING" id="298386.PBPRA2423"/>
<dbReference type="KEGG" id="ppr:PBPRA2423"/>
<dbReference type="eggNOG" id="COG3007">
    <property type="taxonomic scope" value="Bacteria"/>
</dbReference>
<dbReference type="HOGENOM" id="CLU_057698_1_0_6"/>
<dbReference type="UniPathway" id="UPA00094"/>
<dbReference type="Proteomes" id="UP000000593">
    <property type="component" value="Chromosome 1"/>
</dbReference>
<dbReference type="GO" id="GO:0004318">
    <property type="term" value="F:enoyl-[acyl-carrier-protein] reductase (NADH) activity"/>
    <property type="evidence" value="ECO:0007669"/>
    <property type="project" value="UniProtKB-UniRule"/>
</dbReference>
<dbReference type="GO" id="GO:0051287">
    <property type="term" value="F:NAD binding"/>
    <property type="evidence" value="ECO:0007669"/>
    <property type="project" value="UniProtKB-UniRule"/>
</dbReference>
<dbReference type="GO" id="GO:0050343">
    <property type="term" value="F:trans-2-enoyl-CoA reductase (NADH) activity"/>
    <property type="evidence" value="ECO:0007669"/>
    <property type="project" value="TreeGrafter"/>
</dbReference>
<dbReference type="GO" id="GO:0006633">
    <property type="term" value="P:fatty acid biosynthetic process"/>
    <property type="evidence" value="ECO:0007669"/>
    <property type="project" value="UniProtKB-UniRule"/>
</dbReference>
<dbReference type="FunFam" id="3.40.50.720:FF:000221">
    <property type="entry name" value="Enoyl-[acyl-carrier-protein] reductase [NADH]"/>
    <property type="match status" value="1"/>
</dbReference>
<dbReference type="Gene3D" id="3.40.50.720">
    <property type="entry name" value="NAD(P)-binding Rossmann-like Domain"/>
    <property type="match status" value="1"/>
</dbReference>
<dbReference type="HAMAP" id="MF_01838">
    <property type="entry name" value="FabV_reductase"/>
    <property type="match status" value="1"/>
</dbReference>
<dbReference type="InterPro" id="IPR024906">
    <property type="entry name" value="Eno_Rdtase_FAD-bd_dom"/>
</dbReference>
<dbReference type="InterPro" id="IPR024910">
    <property type="entry name" value="Enoyl-CoA_Rdtase_cat_dom"/>
</dbReference>
<dbReference type="InterPro" id="IPR050048">
    <property type="entry name" value="FabV-like_NADH_b"/>
</dbReference>
<dbReference type="InterPro" id="IPR010758">
    <property type="entry name" value="Trans-2-enoyl-CoA_reductase"/>
</dbReference>
<dbReference type="NCBIfam" id="NF043048">
    <property type="entry name" value="EnoyACPredFabV"/>
    <property type="match status" value="1"/>
</dbReference>
<dbReference type="NCBIfam" id="NF010177">
    <property type="entry name" value="PRK13656.1"/>
    <property type="match status" value="1"/>
</dbReference>
<dbReference type="PANTHER" id="PTHR37480">
    <property type="entry name" value="ENOYL-[ACYL-CARRIER-PROTEIN] REDUCTASE [NADH]"/>
    <property type="match status" value="1"/>
</dbReference>
<dbReference type="PANTHER" id="PTHR37480:SF1">
    <property type="entry name" value="ENOYL-[ACYL-CARRIER-PROTEIN] REDUCTASE [NADH]"/>
    <property type="match status" value="1"/>
</dbReference>
<dbReference type="Pfam" id="PF07055">
    <property type="entry name" value="Eno-Rase_FAD_bd"/>
    <property type="match status" value="1"/>
</dbReference>
<dbReference type="Pfam" id="PF12242">
    <property type="entry name" value="Eno-Rase_NADH_b"/>
    <property type="match status" value="1"/>
</dbReference>
<dbReference type="Pfam" id="PF12241">
    <property type="entry name" value="Enoyl_reductase"/>
    <property type="match status" value="1"/>
</dbReference>
<protein>
    <recommendedName>
        <fullName evidence="1">Enoyl-[acyl-carrier-protein] reductase [NADH] 1</fullName>
        <shortName evidence="1">ENR 1</shortName>
        <ecNumber evidence="1">1.3.1.9</ecNumber>
    </recommendedName>
</protein>
<keyword id="KW-0275">Fatty acid biosynthesis</keyword>
<keyword id="KW-0276">Fatty acid metabolism</keyword>
<keyword id="KW-0444">Lipid biosynthesis</keyword>
<keyword id="KW-0443">Lipid metabolism</keyword>
<keyword id="KW-0520">NAD</keyword>
<keyword id="KW-0560">Oxidoreductase</keyword>
<keyword id="KW-1185">Reference proteome</keyword>
<evidence type="ECO:0000255" key="1">
    <source>
        <dbReference type="HAMAP-Rule" id="MF_01838"/>
    </source>
</evidence>
<evidence type="ECO:0000305" key="2"/>
<sequence>MIIKPKIRGFICTTAHPVGCEENVKEQIAYTKAQGPIANAPKRVLVVGSSSGYGLSSRIAAAFGGDAATIGVFFEKPSTEKKPGTAGWYNSAAFDKLAKEEGLYSKSLNGDAFSHEAKQKTIDLIKADLGQIDMVVYSLASPVRKMPETGEVVRSSLKPMGETYTATAVDTNKDVLIEASIEPATEQEIADTVTVMGGQDWELWINALSEAGVLADGCKTVAYSYIGTEITWPIYWHGALGKAKMDLDRAASELNNKLSATGGSANVAVLKSVVTQASSAIPVMPLYIAMVFKKMREEGVHEGCMQQIYRMFTQRLYKADGTAPEVDEENRLRLDDWELREDIQKHCRDLWSSVTNENLFEVADYQEYKDEFIKLFGFGIDSIDYDIDVNTLIEFDVESI</sequence>
<reference key="1">
    <citation type="journal article" date="2005" name="Science">
        <title>Life at depth: Photobacterium profundum genome sequence and expression analysis.</title>
        <authorList>
            <person name="Vezzi A."/>
            <person name="Campanaro S."/>
            <person name="D'Angelo M."/>
            <person name="Simonato F."/>
            <person name="Vitulo N."/>
            <person name="Lauro F.M."/>
            <person name="Cestaro A."/>
            <person name="Malacrida G."/>
            <person name="Simionati B."/>
            <person name="Cannata N."/>
            <person name="Romualdi C."/>
            <person name="Bartlett D.H."/>
            <person name="Valle G."/>
        </authorList>
    </citation>
    <scope>NUCLEOTIDE SEQUENCE [LARGE SCALE GENOMIC DNA]</scope>
    <source>
        <strain>ATCC BAA-1253 / SS9</strain>
    </source>
</reference>
<accession>Q6LPG9</accession>
<gene>
    <name evidence="1" type="primary">fabV1</name>
    <name type="ordered locus">PBPRA2423</name>
</gene>
<organism>
    <name type="scientific">Photobacterium profundum (strain SS9)</name>
    <dbReference type="NCBI Taxonomy" id="298386"/>
    <lineage>
        <taxon>Bacteria</taxon>
        <taxon>Pseudomonadati</taxon>
        <taxon>Pseudomonadota</taxon>
        <taxon>Gammaproteobacteria</taxon>
        <taxon>Vibrionales</taxon>
        <taxon>Vibrionaceae</taxon>
        <taxon>Photobacterium</taxon>
    </lineage>
</organism>
<name>FABV1_PHOPR</name>
<feature type="chain" id="PRO_0000220045" description="Enoyl-[acyl-carrier-protein] reductase [NADH] 1">
    <location>
        <begin position="1"/>
        <end position="400"/>
    </location>
</feature>
<feature type="active site" description="Proton donor" evidence="1">
    <location>
        <position position="235"/>
    </location>
</feature>
<feature type="binding site" evidence="1">
    <location>
        <begin position="48"/>
        <end position="53"/>
    </location>
    <ligand>
        <name>NAD(+)</name>
        <dbReference type="ChEBI" id="CHEBI:57540"/>
    </ligand>
</feature>
<feature type="binding site" evidence="1">
    <location>
        <begin position="74"/>
        <end position="75"/>
    </location>
    <ligand>
        <name>NAD(+)</name>
        <dbReference type="ChEBI" id="CHEBI:57540"/>
    </ligand>
</feature>
<feature type="binding site" evidence="1">
    <location>
        <begin position="111"/>
        <end position="112"/>
    </location>
    <ligand>
        <name>NAD(+)</name>
        <dbReference type="ChEBI" id="CHEBI:57540"/>
    </ligand>
</feature>
<feature type="binding site" evidence="1">
    <location>
        <begin position="139"/>
        <end position="140"/>
    </location>
    <ligand>
        <name>NAD(+)</name>
        <dbReference type="ChEBI" id="CHEBI:57540"/>
    </ligand>
</feature>
<feature type="binding site" evidence="1">
    <location>
        <position position="225"/>
    </location>
    <ligand>
        <name>substrate</name>
    </ligand>
</feature>
<feature type="binding site" evidence="1">
    <location>
        <position position="244"/>
    </location>
    <ligand>
        <name>NAD(+)</name>
        <dbReference type="ChEBI" id="CHEBI:57540"/>
    </ligand>
</feature>
<feature type="binding site" evidence="1">
    <location>
        <begin position="273"/>
        <end position="275"/>
    </location>
    <ligand>
        <name>NAD(+)</name>
        <dbReference type="ChEBI" id="CHEBI:57540"/>
    </ligand>
</feature>
<feature type="site" description="Plays an important role in discriminating NADH against NADPH" evidence="1">
    <location>
        <position position="75"/>
    </location>
</feature>
<comment type="function">
    <text evidence="1">Involved in the final reduction of the elongation cycle of fatty acid synthesis (FAS II). Catalyzes the reduction of a carbon-carbon double bond in an enoyl moiety that is covalently linked to an acyl carrier protein (ACP).</text>
</comment>
<comment type="catalytic activity">
    <reaction evidence="1">
        <text>a 2,3-saturated acyl-[ACP] + NAD(+) = a (2E)-enoyl-[ACP] + NADH + H(+)</text>
        <dbReference type="Rhea" id="RHEA:10240"/>
        <dbReference type="Rhea" id="RHEA-COMP:9925"/>
        <dbReference type="Rhea" id="RHEA-COMP:9926"/>
        <dbReference type="ChEBI" id="CHEBI:15378"/>
        <dbReference type="ChEBI" id="CHEBI:57540"/>
        <dbReference type="ChEBI" id="CHEBI:57945"/>
        <dbReference type="ChEBI" id="CHEBI:78784"/>
        <dbReference type="ChEBI" id="CHEBI:78785"/>
        <dbReference type="EC" id="1.3.1.9"/>
    </reaction>
</comment>
<comment type="pathway">
    <text evidence="1">Lipid metabolism; fatty acid biosynthesis.</text>
</comment>
<comment type="subunit">
    <text evidence="1">Monomer.</text>
</comment>
<comment type="similarity">
    <text evidence="1">Belongs to the TER reductase family.</text>
</comment>
<comment type="sequence caution" evidence="2">
    <conflict type="erroneous initiation">
        <sequence resource="EMBL-CDS" id="CAG20807"/>
    </conflict>
    <text>Extended N-terminus.</text>
</comment>
<proteinExistence type="inferred from homology"/>